<reference key="1">
    <citation type="journal article" date="2009" name="PLoS ONE">
        <title>Genome degradation in Brucella ovis corresponds with narrowing of its host range and tissue tropism.</title>
        <authorList>
            <person name="Tsolis R.M."/>
            <person name="Seshadri R."/>
            <person name="Santos R.L."/>
            <person name="Sangari F.J."/>
            <person name="Lobo J.M."/>
            <person name="de Jong M.F."/>
            <person name="Ren Q."/>
            <person name="Myers G."/>
            <person name="Brinkac L.M."/>
            <person name="Nelson W.C."/>
            <person name="Deboy R.T."/>
            <person name="Angiuoli S."/>
            <person name="Khouri H."/>
            <person name="Dimitrov G."/>
            <person name="Robinson J.R."/>
            <person name="Mulligan S."/>
            <person name="Walker R.L."/>
            <person name="Elzer P.E."/>
            <person name="Hassan K.A."/>
            <person name="Paulsen I.T."/>
        </authorList>
    </citation>
    <scope>NUCLEOTIDE SEQUENCE [LARGE SCALE GENOMIC DNA]</scope>
    <source>
        <strain>ATCC 25840 / 63/290 / NCTC 10512</strain>
    </source>
</reference>
<organism>
    <name type="scientific">Brucella ovis (strain ATCC 25840 / 63/290 / NCTC 10512)</name>
    <dbReference type="NCBI Taxonomy" id="444178"/>
    <lineage>
        <taxon>Bacteria</taxon>
        <taxon>Pseudomonadati</taxon>
        <taxon>Pseudomonadota</taxon>
        <taxon>Alphaproteobacteria</taxon>
        <taxon>Hyphomicrobiales</taxon>
        <taxon>Brucellaceae</taxon>
        <taxon>Brucella/Ochrobactrum group</taxon>
        <taxon>Brucella</taxon>
    </lineage>
</organism>
<sequence length="299" mass="31231">MAQLIDGKKLAEDVVSTVKTETEKLVAATGVVPGIAVVIVGEDPASQVYVASKSRKAKECGFHSVQHDLPETASEQELLNLIEGLNNDPAIHGILVQLPLPGHIDSGRVIQTIAPEKDVDGFHFINVGKLGTGEVETAFVPCTPAGAMIMIERVHGRDLSGLNAVVIGRSNIVGKPMFNLLLAANATVTVAHSRTKDLPAIARNADILVAAVGRPQMVKGDWVKPGATVIDVGINRIPAPERGEGKTRLVGDVDFAEAEKVAGAITPVPGGVGPMTIAMLMANTLTAACRSAGMKKPVF</sequence>
<comment type="function">
    <text evidence="1">Catalyzes the oxidation of 5,10-methylenetetrahydrofolate to 5,10-methenyltetrahydrofolate and then the hydrolysis of 5,10-methenyltetrahydrofolate to 10-formyltetrahydrofolate.</text>
</comment>
<comment type="catalytic activity">
    <reaction evidence="1">
        <text>(6R)-5,10-methylene-5,6,7,8-tetrahydrofolate + NADP(+) = (6R)-5,10-methenyltetrahydrofolate + NADPH</text>
        <dbReference type="Rhea" id="RHEA:22812"/>
        <dbReference type="ChEBI" id="CHEBI:15636"/>
        <dbReference type="ChEBI" id="CHEBI:57455"/>
        <dbReference type="ChEBI" id="CHEBI:57783"/>
        <dbReference type="ChEBI" id="CHEBI:58349"/>
        <dbReference type="EC" id="1.5.1.5"/>
    </reaction>
</comment>
<comment type="catalytic activity">
    <reaction evidence="1">
        <text>(6R)-5,10-methenyltetrahydrofolate + H2O = (6R)-10-formyltetrahydrofolate + H(+)</text>
        <dbReference type="Rhea" id="RHEA:23700"/>
        <dbReference type="ChEBI" id="CHEBI:15377"/>
        <dbReference type="ChEBI" id="CHEBI:15378"/>
        <dbReference type="ChEBI" id="CHEBI:57455"/>
        <dbReference type="ChEBI" id="CHEBI:195366"/>
        <dbReference type="EC" id="3.5.4.9"/>
    </reaction>
</comment>
<comment type="pathway">
    <text evidence="1">One-carbon metabolism; tetrahydrofolate interconversion.</text>
</comment>
<comment type="subunit">
    <text evidence="1">Homodimer.</text>
</comment>
<comment type="similarity">
    <text evidence="1">Belongs to the tetrahydrofolate dehydrogenase/cyclohydrolase family.</text>
</comment>
<gene>
    <name evidence="1" type="primary">folD</name>
    <name type="ordered locus">BOV_A0731</name>
</gene>
<keyword id="KW-0028">Amino-acid biosynthesis</keyword>
<keyword id="KW-0368">Histidine biosynthesis</keyword>
<keyword id="KW-0378">Hydrolase</keyword>
<keyword id="KW-0486">Methionine biosynthesis</keyword>
<keyword id="KW-0511">Multifunctional enzyme</keyword>
<keyword id="KW-0521">NADP</keyword>
<keyword id="KW-0554">One-carbon metabolism</keyword>
<keyword id="KW-0560">Oxidoreductase</keyword>
<keyword id="KW-0658">Purine biosynthesis</keyword>
<feature type="chain" id="PRO_0000305800" description="Bifunctional protein FolD">
    <location>
        <begin position="1"/>
        <end position="299"/>
    </location>
</feature>
<feature type="binding site" evidence="1">
    <location>
        <begin position="168"/>
        <end position="170"/>
    </location>
    <ligand>
        <name>NADP(+)</name>
        <dbReference type="ChEBI" id="CHEBI:58349"/>
    </ligand>
</feature>
<feature type="binding site" evidence="1">
    <location>
        <position position="193"/>
    </location>
    <ligand>
        <name>NADP(+)</name>
        <dbReference type="ChEBI" id="CHEBI:58349"/>
    </ligand>
</feature>
<feature type="binding site" evidence="1">
    <location>
        <position position="234"/>
    </location>
    <ligand>
        <name>NADP(+)</name>
        <dbReference type="ChEBI" id="CHEBI:58349"/>
    </ligand>
</feature>
<evidence type="ECO:0000255" key="1">
    <source>
        <dbReference type="HAMAP-Rule" id="MF_01576"/>
    </source>
</evidence>
<accession>A5VV73</accession>
<name>FOLD_BRUO2</name>
<protein>
    <recommendedName>
        <fullName evidence="1">Bifunctional protein FolD</fullName>
    </recommendedName>
    <domain>
        <recommendedName>
            <fullName evidence="1">Methylenetetrahydrofolate dehydrogenase</fullName>
            <ecNumber evidence="1">1.5.1.5</ecNumber>
        </recommendedName>
    </domain>
    <domain>
        <recommendedName>
            <fullName evidence="1">Methenyltetrahydrofolate cyclohydrolase</fullName>
            <ecNumber evidence="1">3.5.4.9</ecNumber>
        </recommendedName>
    </domain>
</protein>
<proteinExistence type="inferred from homology"/>
<dbReference type="EC" id="1.5.1.5" evidence="1"/>
<dbReference type="EC" id="3.5.4.9" evidence="1"/>
<dbReference type="EMBL" id="CP000709">
    <property type="protein sequence ID" value="ABQ62484.1"/>
    <property type="molecule type" value="Genomic_DNA"/>
</dbReference>
<dbReference type="RefSeq" id="WP_002967255.1">
    <property type="nucleotide sequence ID" value="NC_009504.1"/>
</dbReference>
<dbReference type="SMR" id="A5VV73"/>
<dbReference type="GeneID" id="97535127"/>
<dbReference type="KEGG" id="bov:BOV_A0731"/>
<dbReference type="HOGENOM" id="CLU_034045_1_2_5"/>
<dbReference type="UniPathway" id="UPA00193"/>
<dbReference type="Proteomes" id="UP000006383">
    <property type="component" value="Chromosome II"/>
</dbReference>
<dbReference type="GO" id="GO:0005829">
    <property type="term" value="C:cytosol"/>
    <property type="evidence" value="ECO:0007669"/>
    <property type="project" value="TreeGrafter"/>
</dbReference>
<dbReference type="GO" id="GO:0004477">
    <property type="term" value="F:methenyltetrahydrofolate cyclohydrolase activity"/>
    <property type="evidence" value="ECO:0007669"/>
    <property type="project" value="UniProtKB-UniRule"/>
</dbReference>
<dbReference type="GO" id="GO:0004488">
    <property type="term" value="F:methylenetetrahydrofolate dehydrogenase (NADP+) activity"/>
    <property type="evidence" value="ECO:0007669"/>
    <property type="project" value="UniProtKB-UniRule"/>
</dbReference>
<dbReference type="GO" id="GO:0000105">
    <property type="term" value="P:L-histidine biosynthetic process"/>
    <property type="evidence" value="ECO:0007669"/>
    <property type="project" value="UniProtKB-KW"/>
</dbReference>
<dbReference type="GO" id="GO:0009086">
    <property type="term" value="P:methionine biosynthetic process"/>
    <property type="evidence" value="ECO:0007669"/>
    <property type="project" value="UniProtKB-KW"/>
</dbReference>
<dbReference type="GO" id="GO:0006164">
    <property type="term" value="P:purine nucleotide biosynthetic process"/>
    <property type="evidence" value="ECO:0007669"/>
    <property type="project" value="UniProtKB-KW"/>
</dbReference>
<dbReference type="GO" id="GO:0035999">
    <property type="term" value="P:tetrahydrofolate interconversion"/>
    <property type="evidence" value="ECO:0007669"/>
    <property type="project" value="UniProtKB-UniRule"/>
</dbReference>
<dbReference type="CDD" id="cd01080">
    <property type="entry name" value="NAD_bind_m-THF_DH_Cyclohyd"/>
    <property type="match status" value="1"/>
</dbReference>
<dbReference type="FunFam" id="3.40.50.720:FF:000006">
    <property type="entry name" value="Bifunctional protein FolD"/>
    <property type="match status" value="1"/>
</dbReference>
<dbReference type="FunFam" id="3.40.50.10860:FF:000005">
    <property type="entry name" value="C-1-tetrahydrofolate synthase, cytoplasmic, putative"/>
    <property type="match status" value="1"/>
</dbReference>
<dbReference type="Gene3D" id="3.40.50.10860">
    <property type="entry name" value="Leucine Dehydrogenase, chain A, domain 1"/>
    <property type="match status" value="1"/>
</dbReference>
<dbReference type="Gene3D" id="3.40.50.720">
    <property type="entry name" value="NAD(P)-binding Rossmann-like Domain"/>
    <property type="match status" value="1"/>
</dbReference>
<dbReference type="HAMAP" id="MF_01576">
    <property type="entry name" value="THF_DHG_CYH"/>
    <property type="match status" value="1"/>
</dbReference>
<dbReference type="InterPro" id="IPR046346">
    <property type="entry name" value="Aminoacid_DH-like_N_sf"/>
</dbReference>
<dbReference type="InterPro" id="IPR036291">
    <property type="entry name" value="NAD(P)-bd_dom_sf"/>
</dbReference>
<dbReference type="InterPro" id="IPR000672">
    <property type="entry name" value="THF_DH/CycHdrlase"/>
</dbReference>
<dbReference type="InterPro" id="IPR020630">
    <property type="entry name" value="THF_DH/CycHdrlase_cat_dom"/>
</dbReference>
<dbReference type="InterPro" id="IPR020867">
    <property type="entry name" value="THF_DH/CycHdrlase_CS"/>
</dbReference>
<dbReference type="InterPro" id="IPR020631">
    <property type="entry name" value="THF_DH/CycHdrlase_NAD-bd_dom"/>
</dbReference>
<dbReference type="NCBIfam" id="NF008058">
    <property type="entry name" value="PRK10792.1"/>
    <property type="match status" value="1"/>
</dbReference>
<dbReference type="NCBIfam" id="NF010783">
    <property type="entry name" value="PRK14186.1"/>
    <property type="match status" value="1"/>
</dbReference>
<dbReference type="NCBIfam" id="NF010785">
    <property type="entry name" value="PRK14188.1"/>
    <property type="match status" value="1"/>
</dbReference>
<dbReference type="PANTHER" id="PTHR48099:SF5">
    <property type="entry name" value="C-1-TETRAHYDROFOLATE SYNTHASE, CYTOPLASMIC"/>
    <property type="match status" value="1"/>
</dbReference>
<dbReference type="PANTHER" id="PTHR48099">
    <property type="entry name" value="C-1-TETRAHYDROFOLATE SYNTHASE, CYTOPLASMIC-RELATED"/>
    <property type="match status" value="1"/>
</dbReference>
<dbReference type="Pfam" id="PF00763">
    <property type="entry name" value="THF_DHG_CYH"/>
    <property type="match status" value="1"/>
</dbReference>
<dbReference type="Pfam" id="PF02882">
    <property type="entry name" value="THF_DHG_CYH_C"/>
    <property type="match status" value="1"/>
</dbReference>
<dbReference type="PRINTS" id="PR00085">
    <property type="entry name" value="THFDHDRGNASE"/>
</dbReference>
<dbReference type="SUPFAM" id="SSF53223">
    <property type="entry name" value="Aminoacid dehydrogenase-like, N-terminal domain"/>
    <property type="match status" value="1"/>
</dbReference>
<dbReference type="SUPFAM" id="SSF51735">
    <property type="entry name" value="NAD(P)-binding Rossmann-fold domains"/>
    <property type="match status" value="1"/>
</dbReference>
<dbReference type="PROSITE" id="PS00766">
    <property type="entry name" value="THF_DHG_CYH_1"/>
    <property type="match status" value="1"/>
</dbReference>
<dbReference type="PROSITE" id="PS00767">
    <property type="entry name" value="THF_DHG_CYH_2"/>
    <property type="match status" value="1"/>
</dbReference>